<keyword id="KW-0067">ATP-binding</keyword>
<keyword id="KW-1003">Cell membrane</keyword>
<keyword id="KW-0145">Chemotaxis</keyword>
<keyword id="KW-0968">Cytoplasmic vesicle</keyword>
<keyword id="KW-0217">Developmental protein</keyword>
<keyword id="KW-1015">Disulfide bond</keyword>
<keyword id="KW-0325">Glycoprotein</keyword>
<keyword id="KW-0393">Immunoglobulin domain</keyword>
<keyword id="KW-0418">Kinase</keyword>
<keyword id="KW-0458">Lysosome</keyword>
<keyword id="KW-0472">Membrane</keyword>
<keyword id="KW-0547">Nucleotide-binding</keyword>
<keyword id="KW-0597">Phosphoprotein</keyword>
<keyword id="KW-0675">Receptor</keyword>
<keyword id="KW-1185">Reference proteome</keyword>
<keyword id="KW-0677">Repeat</keyword>
<keyword id="KW-0732">Signal</keyword>
<keyword id="KW-0808">Transferase</keyword>
<keyword id="KW-0812">Transmembrane</keyword>
<keyword id="KW-1133">Transmembrane helix</keyword>
<keyword id="KW-0829">Tyrosine-protein kinase</keyword>
<keyword id="KW-0832">Ubl conjugation</keyword>
<dbReference type="EC" id="2.7.10.1"/>
<dbReference type="EMBL" id="AY532634">
    <property type="protein sequence ID" value="AAS48371.1"/>
    <property type="molecule type" value="mRNA"/>
</dbReference>
<dbReference type="RefSeq" id="NP_001003382.1">
    <property type="nucleotide sequence ID" value="NM_001003382.1"/>
</dbReference>
<dbReference type="RefSeq" id="XP_005618929.1">
    <property type="nucleotide sequence ID" value="XM_005618872.2"/>
</dbReference>
<dbReference type="RefSeq" id="XP_005618930.1">
    <property type="nucleotide sequence ID" value="XM_005618873.2"/>
</dbReference>
<dbReference type="BMRB" id="Q6QNF3"/>
<dbReference type="SMR" id="Q6QNF3"/>
<dbReference type="BioGRID" id="140028">
    <property type="interactions" value="1"/>
</dbReference>
<dbReference type="FunCoup" id="Q6QNF3">
    <property type="interactions" value="515"/>
</dbReference>
<dbReference type="STRING" id="9615.ENSCAFP00000000714"/>
<dbReference type="ChEMBL" id="CHEMBL5303562"/>
<dbReference type="GlyCosmos" id="Q6QNF3">
    <property type="glycosylation" value="10 sites, No reported glycans"/>
</dbReference>
<dbReference type="PaxDb" id="9612-ENSCAFP00000000714"/>
<dbReference type="GeneID" id="442985"/>
<dbReference type="KEGG" id="cfa:442985"/>
<dbReference type="CTD" id="5159"/>
<dbReference type="eggNOG" id="KOG0200">
    <property type="taxonomic scope" value="Eukaryota"/>
</dbReference>
<dbReference type="InParanoid" id="Q6QNF3"/>
<dbReference type="OrthoDB" id="9936425at2759"/>
<dbReference type="Proteomes" id="UP000002254">
    <property type="component" value="Unplaced"/>
</dbReference>
<dbReference type="Proteomes" id="UP000694429">
    <property type="component" value="Unplaced"/>
</dbReference>
<dbReference type="Proteomes" id="UP000694542">
    <property type="component" value="Unplaced"/>
</dbReference>
<dbReference type="Proteomes" id="UP000805418">
    <property type="component" value="Unplaced"/>
</dbReference>
<dbReference type="GO" id="GO:0016324">
    <property type="term" value="C:apical plasma membrane"/>
    <property type="evidence" value="ECO:0000250"/>
    <property type="project" value="UniProtKB"/>
</dbReference>
<dbReference type="GO" id="GO:0005737">
    <property type="term" value="C:cytoplasm"/>
    <property type="evidence" value="ECO:0000250"/>
    <property type="project" value="UniProtKB"/>
</dbReference>
<dbReference type="GO" id="GO:0031410">
    <property type="term" value="C:cytoplasmic vesicle"/>
    <property type="evidence" value="ECO:0007669"/>
    <property type="project" value="UniProtKB-KW"/>
</dbReference>
<dbReference type="GO" id="GO:0043202">
    <property type="term" value="C:lysosomal lumen"/>
    <property type="evidence" value="ECO:0007669"/>
    <property type="project" value="UniProtKB-SubCell"/>
</dbReference>
<dbReference type="GO" id="GO:0005634">
    <property type="term" value="C:nucleus"/>
    <property type="evidence" value="ECO:0000250"/>
    <property type="project" value="UniProtKB"/>
</dbReference>
<dbReference type="GO" id="GO:0005886">
    <property type="term" value="C:plasma membrane"/>
    <property type="evidence" value="ECO:0000250"/>
    <property type="project" value="UniProtKB"/>
</dbReference>
<dbReference type="GO" id="GO:0043235">
    <property type="term" value="C:receptor complex"/>
    <property type="evidence" value="ECO:0000318"/>
    <property type="project" value="GO_Central"/>
</dbReference>
<dbReference type="GO" id="GO:0005524">
    <property type="term" value="F:ATP binding"/>
    <property type="evidence" value="ECO:0007669"/>
    <property type="project" value="UniProtKB-KW"/>
</dbReference>
<dbReference type="GO" id="GO:0005096">
    <property type="term" value="F:GTPase activator activity"/>
    <property type="evidence" value="ECO:0000250"/>
    <property type="project" value="UniProtKB"/>
</dbReference>
<dbReference type="GO" id="GO:0160185">
    <property type="term" value="F:phospholipase C activator activity"/>
    <property type="evidence" value="ECO:0000250"/>
    <property type="project" value="UniProtKB"/>
</dbReference>
<dbReference type="GO" id="GO:0005019">
    <property type="term" value="F:platelet-derived growth factor beta-receptor activity"/>
    <property type="evidence" value="ECO:0000250"/>
    <property type="project" value="UniProtKB"/>
</dbReference>
<dbReference type="GO" id="GO:0048407">
    <property type="term" value="F:platelet-derived growth factor binding"/>
    <property type="evidence" value="ECO:0000318"/>
    <property type="project" value="GO_Central"/>
</dbReference>
<dbReference type="GO" id="GO:0001525">
    <property type="term" value="P:angiogenesis"/>
    <property type="evidence" value="ECO:0000318"/>
    <property type="project" value="GO_Central"/>
</dbReference>
<dbReference type="GO" id="GO:0060326">
    <property type="term" value="P:cell chemotaxis"/>
    <property type="evidence" value="ECO:0000318"/>
    <property type="project" value="GO_Central"/>
</dbReference>
<dbReference type="GO" id="GO:0060981">
    <property type="term" value="P:cell migration involved in coronary angiogenesis"/>
    <property type="evidence" value="ECO:0000250"/>
    <property type="project" value="UniProtKB"/>
</dbReference>
<dbReference type="GO" id="GO:0035441">
    <property type="term" value="P:cell migration involved in vasculogenesis"/>
    <property type="evidence" value="ECO:0000250"/>
    <property type="project" value="UniProtKB"/>
</dbReference>
<dbReference type="GO" id="GO:0007169">
    <property type="term" value="P:cell surface receptor protein tyrosine kinase signaling pathway"/>
    <property type="evidence" value="ECO:0000318"/>
    <property type="project" value="GO_Central"/>
</dbReference>
<dbReference type="GO" id="GO:0048008">
    <property type="term" value="P:platelet-derived growth factor receptor signaling pathway"/>
    <property type="evidence" value="ECO:0000250"/>
    <property type="project" value="UniProtKB"/>
</dbReference>
<dbReference type="GO" id="GO:0050850">
    <property type="term" value="P:positive regulation of calcium-mediated signaling"/>
    <property type="evidence" value="ECO:0000250"/>
    <property type="project" value="UniProtKB"/>
</dbReference>
<dbReference type="GO" id="GO:0030335">
    <property type="term" value="P:positive regulation of cell migration"/>
    <property type="evidence" value="ECO:0000250"/>
    <property type="project" value="UniProtKB"/>
</dbReference>
<dbReference type="GO" id="GO:0008284">
    <property type="term" value="P:positive regulation of cell population proliferation"/>
    <property type="evidence" value="ECO:0000250"/>
    <property type="project" value="UniProtKB"/>
</dbReference>
<dbReference type="GO" id="GO:0070374">
    <property type="term" value="P:positive regulation of ERK1 and ERK2 cascade"/>
    <property type="evidence" value="ECO:0000250"/>
    <property type="project" value="UniProtKB"/>
</dbReference>
<dbReference type="GO" id="GO:0051897">
    <property type="term" value="P:positive regulation of phosphatidylinositol 3-kinase/protein kinase B signal transduction"/>
    <property type="evidence" value="ECO:0000250"/>
    <property type="project" value="UniProtKB"/>
</dbReference>
<dbReference type="GO" id="GO:0014911">
    <property type="term" value="P:positive regulation of smooth muscle cell migration"/>
    <property type="evidence" value="ECO:0000250"/>
    <property type="project" value="UniProtKB"/>
</dbReference>
<dbReference type="GO" id="GO:0048661">
    <property type="term" value="P:positive regulation of smooth muscle cell proliferation"/>
    <property type="evidence" value="ECO:0000250"/>
    <property type="project" value="UniProtKB"/>
</dbReference>
<dbReference type="GO" id="GO:0046777">
    <property type="term" value="P:protein autophosphorylation"/>
    <property type="evidence" value="ECO:0000250"/>
    <property type="project" value="UniProtKB"/>
</dbReference>
<dbReference type="GO" id="GO:0061298">
    <property type="term" value="P:retina vasculature development in camera-type eye"/>
    <property type="evidence" value="ECO:0000250"/>
    <property type="project" value="UniProtKB"/>
</dbReference>
<dbReference type="CDD" id="cd00096">
    <property type="entry name" value="Ig"/>
    <property type="match status" value="1"/>
</dbReference>
<dbReference type="FunFam" id="3.30.200.20:FF:000025">
    <property type="entry name" value="Platelet-derived growth factor receptor alpha"/>
    <property type="match status" value="1"/>
</dbReference>
<dbReference type="FunFam" id="1.10.510.10:FF:000140">
    <property type="entry name" value="Platelet-derived growth factor receptor beta"/>
    <property type="match status" value="1"/>
</dbReference>
<dbReference type="FunFam" id="2.60.40.10:FF:000223">
    <property type="entry name" value="Platelet-derived growth factor receptor beta"/>
    <property type="match status" value="1"/>
</dbReference>
<dbReference type="FunFam" id="2.60.40.10:FF:000572">
    <property type="entry name" value="Platelet-derived growth factor receptor beta"/>
    <property type="match status" value="1"/>
</dbReference>
<dbReference type="FunFam" id="2.60.40.10:FF:000715">
    <property type="entry name" value="Platelet-derived growth factor receptor beta"/>
    <property type="match status" value="1"/>
</dbReference>
<dbReference type="FunFam" id="2.60.40.10:FF:000814">
    <property type="entry name" value="Platelet-derived growth factor receptor beta"/>
    <property type="match status" value="1"/>
</dbReference>
<dbReference type="FunFam" id="2.60.40.10:FF:000982">
    <property type="entry name" value="Platelet-derived growth factor receptor beta"/>
    <property type="match status" value="1"/>
</dbReference>
<dbReference type="Gene3D" id="2.60.40.10">
    <property type="entry name" value="Immunoglobulins"/>
    <property type="match status" value="5"/>
</dbReference>
<dbReference type="Gene3D" id="3.30.200.20">
    <property type="entry name" value="Phosphorylase Kinase, domain 1"/>
    <property type="match status" value="1"/>
</dbReference>
<dbReference type="Gene3D" id="1.10.510.10">
    <property type="entry name" value="Transferase(Phosphotransferase) domain 1"/>
    <property type="match status" value="1"/>
</dbReference>
<dbReference type="InterPro" id="IPR007110">
    <property type="entry name" value="Ig-like_dom"/>
</dbReference>
<dbReference type="InterPro" id="IPR036179">
    <property type="entry name" value="Ig-like_dom_sf"/>
</dbReference>
<dbReference type="InterPro" id="IPR013783">
    <property type="entry name" value="Ig-like_fold"/>
</dbReference>
<dbReference type="InterPro" id="IPR013098">
    <property type="entry name" value="Ig_I-set"/>
</dbReference>
<dbReference type="InterPro" id="IPR003599">
    <property type="entry name" value="Ig_sub"/>
</dbReference>
<dbReference type="InterPro" id="IPR003598">
    <property type="entry name" value="Ig_sub2"/>
</dbReference>
<dbReference type="InterPro" id="IPR013151">
    <property type="entry name" value="Immunoglobulin_dom"/>
</dbReference>
<dbReference type="InterPro" id="IPR011009">
    <property type="entry name" value="Kinase-like_dom_sf"/>
</dbReference>
<dbReference type="InterPro" id="IPR027288">
    <property type="entry name" value="PGFRB"/>
</dbReference>
<dbReference type="InterPro" id="IPR000719">
    <property type="entry name" value="Prot_kinase_dom"/>
</dbReference>
<dbReference type="InterPro" id="IPR017441">
    <property type="entry name" value="Protein_kinase_ATP_BS"/>
</dbReference>
<dbReference type="InterPro" id="IPR050122">
    <property type="entry name" value="RTK"/>
</dbReference>
<dbReference type="InterPro" id="IPR001245">
    <property type="entry name" value="Ser-Thr/Tyr_kinase_cat_dom"/>
</dbReference>
<dbReference type="InterPro" id="IPR008266">
    <property type="entry name" value="Tyr_kinase_AS"/>
</dbReference>
<dbReference type="InterPro" id="IPR020635">
    <property type="entry name" value="Tyr_kinase_cat_dom"/>
</dbReference>
<dbReference type="InterPro" id="IPR001824">
    <property type="entry name" value="Tyr_kinase_rcpt_3_CS"/>
</dbReference>
<dbReference type="PANTHER" id="PTHR24416:SF53">
    <property type="entry name" value="PLATELET-DERIVED GROWTH FACTOR RECEPTOR BETA"/>
    <property type="match status" value="1"/>
</dbReference>
<dbReference type="PANTHER" id="PTHR24416">
    <property type="entry name" value="TYROSINE-PROTEIN KINASE RECEPTOR"/>
    <property type="match status" value="1"/>
</dbReference>
<dbReference type="Pfam" id="PF07679">
    <property type="entry name" value="I-set"/>
    <property type="match status" value="1"/>
</dbReference>
<dbReference type="Pfam" id="PF00047">
    <property type="entry name" value="ig"/>
    <property type="match status" value="1"/>
</dbReference>
<dbReference type="Pfam" id="PF13927">
    <property type="entry name" value="Ig_3"/>
    <property type="match status" value="1"/>
</dbReference>
<dbReference type="Pfam" id="PF25305">
    <property type="entry name" value="Ig_PDGFR_d4"/>
    <property type="match status" value="1"/>
</dbReference>
<dbReference type="Pfam" id="PF07714">
    <property type="entry name" value="PK_Tyr_Ser-Thr"/>
    <property type="match status" value="1"/>
</dbReference>
<dbReference type="PIRSF" id="PIRSF500948">
    <property type="entry name" value="Beta-PDGF_receptor"/>
    <property type="match status" value="1"/>
</dbReference>
<dbReference type="PIRSF" id="PIRSF000615">
    <property type="entry name" value="TyrPK_CSF1-R"/>
    <property type="match status" value="1"/>
</dbReference>
<dbReference type="PRINTS" id="PR01832">
    <property type="entry name" value="VEGFRECEPTOR"/>
</dbReference>
<dbReference type="SMART" id="SM00409">
    <property type="entry name" value="IG"/>
    <property type="match status" value="3"/>
</dbReference>
<dbReference type="SMART" id="SM00408">
    <property type="entry name" value="IGc2"/>
    <property type="match status" value="3"/>
</dbReference>
<dbReference type="SMART" id="SM00219">
    <property type="entry name" value="TyrKc"/>
    <property type="match status" value="1"/>
</dbReference>
<dbReference type="SUPFAM" id="SSF48726">
    <property type="entry name" value="Immunoglobulin"/>
    <property type="match status" value="3"/>
</dbReference>
<dbReference type="SUPFAM" id="SSF56112">
    <property type="entry name" value="Protein kinase-like (PK-like)"/>
    <property type="match status" value="1"/>
</dbReference>
<dbReference type="PROSITE" id="PS50835">
    <property type="entry name" value="IG_LIKE"/>
    <property type="match status" value="2"/>
</dbReference>
<dbReference type="PROSITE" id="PS00107">
    <property type="entry name" value="PROTEIN_KINASE_ATP"/>
    <property type="match status" value="1"/>
</dbReference>
<dbReference type="PROSITE" id="PS50011">
    <property type="entry name" value="PROTEIN_KINASE_DOM"/>
    <property type="match status" value="1"/>
</dbReference>
<dbReference type="PROSITE" id="PS00109">
    <property type="entry name" value="PROTEIN_KINASE_TYR"/>
    <property type="match status" value="1"/>
</dbReference>
<dbReference type="PROSITE" id="PS00240">
    <property type="entry name" value="RECEPTOR_TYR_KIN_III"/>
    <property type="match status" value="1"/>
</dbReference>
<sequence length="1103" mass="123022">MQVPGTMPAPVLKGQALWLPLLLMLSPQASGGLVITPPGPELVLNISSTFVLTCSGPAPVVWERLSQEPLQKMARTQDGTFSSTLTLTNVTGLDTGEYFCTYKGSHGLEPDGRKRLYIFVPDPTMGFLPVDPEELFIFLTEITEITIPCRVTDPRLVVTLHEKKVDIPLPIPYDHQRGFSGTFEDKTYVCKTTIGDKEVDSEAYYVYSLQVSSINVSVNAVQTVVRQGENITIMCIVTGNEVVNFEWTYPRMESGRLVEPVTDFLFNVPSHIRSILHIPSAELGDSGTYICNVSESVNDHRDEKSINVTVVESGYVRLLGELDAVQFAELHRSRALQVVFEAYPPPTVVWFKDNRTLGDSSAGEIALSTRNVSETRYVSELTLVRVKVAEAGYYTMRAFHEDAEAQLSFQLQVNVPVRVLELSESHPASGEQTVRCRGRGMPQPHLTWSTCSDLKRCPRELPPTPLGNSSEEESQLETNVTYWPEDQEFEVVSTLRLRRVDQPLSVRCTLHNLLGHDMQEVTVVPHSLPFKVVVISAILALVVLTIISLIILIMLWQKKPRYEIRWKVIESVSSDGHEYIYVDPMQLPYDSTWELPRDQLVLGRTLGSGAFGQVVEATAHGLSHSQATMKVAVKMLKSTARSSEKQALMSELKIMSHLGPHLNVVNLLGACTKGGPIYIITEYCRYGDLVDYLHRNKHTFLQLCSDKRRPPSAELYSNALPAGLPLPSHVSLPGESDGGYMDMSKDESVDYVPMLDMKGGVKYADIESSSYMAPYDNYVPTAPERTCRATLINESPVLSYTDLVGFSYQVANGMEFLASKNCVHRDLAARNVLICEGKLVKICDFGLARDIMRDSNYISKGSTFLPLKWMAPESIFNSLYTTLSDVWSFGILLWEIFTLGGTPYPELPMNEQFYNAIKRGYRMAQPAHASDEIYEIMQKCWEEKFEIRPPFSQLVLLLERLLGEGYKKKYQQVDEEFLRSDHPAVLRSQARLPGFPGLRSPLDTSSVLYTAVQPNEGDNDYIIPLPDPKPEVADGPLESSPSLASSTLNEVNTSSTISCDSPLEPQEEPEPEPEPQPEPQVVPEPPLDSSCPGPRAEAEDSFL</sequence>
<protein>
    <recommendedName>
        <fullName>Platelet-derived growth factor receptor beta</fullName>
        <shortName>PDGF-R-beta</shortName>
        <shortName>PDGFR-beta</shortName>
        <ecNumber>2.7.10.1</ecNumber>
    </recommendedName>
    <alternativeName>
        <fullName>Beta platelet-derived growth factor receptor</fullName>
    </alternativeName>
    <alternativeName>
        <fullName>Beta-type platelet-derived growth factor receptor</fullName>
    </alternativeName>
    <alternativeName>
        <fullName>CD140 antigen-like family member B</fullName>
    </alternativeName>
    <alternativeName>
        <fullName>Platelet-derived growth factor receptor 1</fullName>
        <shortName>PDGFR-1</shortName>
    </alternativeName>
    <cdAntigenName>CD140b</cdAntigenName>
</protein>
<accession>Q6QNF3</accession>
<gene>
    <name type="primary">PDGFRB</name>
    <name type="synonym">PDGFR</name>
    <name type="synonym">PDGFR1</name>
</gene>
<reference key="1">
    <citation type="submission" date="2004-01" db="EMBL/GenBank/DDBJ databases">
        <title>Characterization of PDGFb on the histiocytic sarcoma.</title>
        <authorList>
            <person name="Liao A.T."/>
            <person name="Chien M.B."/>
            <person name="London C.A."/>
        </authorList>
    </citation>
    <scope>NUCLEOTIDE SEQUENCE [MRNA]</scope>
</reference>
<comment type="function">
    <text evidence="1">Tyrosine-protein kinase that acts as a cell-surface receptor for homodimeric PDGFB and PDGFD and for heterodimers formed by PDGFA and PDGFB, and plays an essential role in the regulation of embryonic development, cell proliferation, survival, differentiation, chemotaxis and migration. Plays an essential role in blood vessel development by promoting proliferation, migration and recruitment of pericytes and smooth muscle cells to endothelial cells. Plays a role in the migration of vascular smooth muscle cells and the formation of neointima at vascular injury sites. Required for normal development of the cardiovascular system. Required for normal recruitment of pericytes (mesangial cells) in the kidney glomerulus, and for normal formation of a branched network of capillaries in kidney glomeruli. Promotes rearrangement of the actin cytoskeleton and the formation of membrane ruffles. Binding of its cognate ligands - homodimeric PDGFB, heterodimers formed by PDGFA and PDGFB or homodimeric PDGFD -leads to the activation of several signaling cascades; the response depends on the nature of the bound ligand and is modulated by the formation of heterodimers between PDGFRA and PDGFRB. Phosphorylates PLCG1, PIK3R1, PTPN11, RASA1/GAP, CBL, SHC1 and NCK1. Activation of PLCG1 leads to the production of the cellular signaling molecules diacylglycerol and inositol 1,4,5-trisphosphate, mobilization of cytosolic Ca(2+) and the activation of protein kinase C. Phosphorylation of PIK3R1, the regulatory subunit of phosphatidylinositol 3-kinase, leads to the activation of the AKT1 signaling pathway. Phosphorylation of SHC1, or of the C-terminus of PTPN11, creates a binding site for GRB2, resulting in the activation of HRAS, RAF1 and down-stream MAP kinases, including MAPK1/ERK2 and/or MAPK3/ERK1. Promotes phosphorylation and activation of SRC family kinases. Promotes phosphorylation of PDCD6IP/ALIX and STAM. Receptor signaling is down-regulated by protein phosphatases that dephosphorylate the receptor and its down-stream effectors, and by rapid internalization of the activated receptor (By similarity).</text>
</comment>
<comment type="catalytic activity">
    <reaction evidence="7">
        <text>L-tyrosyl-[protein] + ATP = O-phospho-L-tyrosyl-[protein] + ADP + H(+)</text>
        <dbReference type="Rhea" id="RHEA:10596"/>
        <dbReference type="Rhea" id="RHEA-COMP:10136"/>
        <dbReference type="Rhea" id="RHEA-COMP:20101"/>
        <dbReference type="ChEBI" id="CHEBI:15378"/>
        <dbReference type="ChEBI" id="CHEBI:30616"/>
        <dbReference type="ChEBI" id="CHEBI:46858"/>
        <dbReference type="ChEBI" id="CHEBI:61978"/>
        <dbReference type="ChEBI" id="CHEBI:456216"/>
        <dbReference type="EC" id="2.7.10.1"/>
    </reaction>
</comment>
<comment type="activity regulation">
    <text evidence="1">Present in an inactive conformation in the absence of bound ligand. Binding of PDGFB and/or PDGFD leads to dimerization and activation by autophosphorylation on tyrosine residues (By similarity).</text>
</comment>
<comment type="subunit">
    <text evidence="1">Interacts with homodimeric PDGFB and PDGFD, and with heterodimers formed by PDGFA and PDGFB. May also interact with homodimeric PDGFC. Monomer in the absence of bound ligand. Interaction with homodimeric PDGFB, heterodimers formed by PDGFA and PDGFB or homodimeric PDGFD, leads to receptor dimerization, where both PDGFRA homodimers and heterodimers with PDGFRB are observed. Interacts with SH2B2/APS. Interacts directly (tyrosine phosphorylated) with SHB. Interacts (tyrosine phosphorylated) with PIK3R1 and RASA1. Interacts (tyrosine phosphorylated) with CBL. Interacts (tyrosine phosphorylated) with SRC and SRC family kinases. Interacts (tyrosine phosphorylated) with PIK3C2B, maybe indirectly. Interacts (tyrosine phosphorylated) with SHC1, GRB7, GRB10 and NCK1. Interaction with GRB2 is mediated by SHC1. Interacts (via C-terminus) with NHERF1 (By similarity).</text>
</comment>
<comment type="subcellular location">
    <subcellularLocation>
        <location evidence="1">Cell membrane</location>
        <topology evidence="1">Single-pass type I membrane protein</topology>
    </subcellularLocation>
    <subcellularLocation>
        <location evidence="1">Cytoplasmic vesicle</location>
    </subcellularLocation>
    <subcellularLocation>
        <location evidence="1">Lysosome lumen</location>
    </subcellularLocation>
    <text evidence="1">After ligand binding, the autophosphorylated receptor is ubiquitinated and internalized, leading to its degradation.</text>
</comment>
<comment type="PTM">
    <text evidence="1">N-glycosylated.</text>
</comment>
<comment type="PTM">
    <text evidence="1">Ubiquitinated. After autophosphorylation, the receptor is polyubiquitinated, leading to its degradation (By similarity).</text>
</comment>
<comment type="PTM">
    <text evidence="1">Autophosphorylated on tyrosine residues upon ligand binding. Autophosphorylation occurs in trans, i.e. one subunit of the dimeric receptor phosphorylates tyrosine residues on the other subunit. Phosphorylation at Tyr-579, and to a lesser degree, Tyr-581 is important for interaction with SRC. Phosphorylation at Tyr-716 is important for interaction with GRB2. Phosphorylation at Tyr-740 and Tyr-751 is important for interaction with PIK3R1. Phosphorylation at Tyr-751 is important for interaction with NCK1. Phosphorylation at Tyr-771 and Tyr-857 is important for interaction with RASA1/GAP. Phosphorylation at Tyr-857 is important for efficient phosphorylation of PLCG1 and PTPN11, resulting in increased phosphorylation of AKT1, MAPK1/ERK2 and/or MAPK3/ERK1, PDCD6IP/ALIX and STAM, and in increased cell proliferation. Phosphorylation at Tyr-1009 is important for interaction with PTPN11. Phosphorylation at Tyr-1009 and Tyr-1021 is important for interaction with PLCG1. Dephosphorylated by PTPRJ at Tyr-751, Tyr-857, Tyr-1009 and Tyr-1021 (By similarity). Dephosphorylated by PTPN2 at Tyr-579 and Tyr-1021 (By similarity).</text>
</comment>
<comment type="similarity">
    <text evidence="6">Belongs to the protein kinase superfamily. Tyr protein kinase family. CSF-1/PDGF receptor subfamily.</text>
</comment>
<organism>
    <name type="scientific">Canis lupus familiaris</name>
    <name type="common">Dog</name>
    <name type="synonym">Canis familiaris</name>
    <dbReference type="NCBI Taxonomy" id="9615"/>
    <lineage>
        <taxon>Eukaryota</taxon>
        <taxon>Metazoa</taxon>
        <taxon>Chordata</taxon>
        <taxon>Craniata</taxon>
        <taxon>Vertebrata</taxon>
        <taxon>Euteleostomi</taxon>
        <taxon>Mammalia</taxon>
        <taxon>Eutheria</taxon>
        <taxon>Laurasiatheria</taxon>
        <taxon>Carnivora</taxon>
        <taxon>Caniformia</taxon>
        <taxon>Canidae</taxon>
        <taxon>Canis</taxon>
    </lineage>
</organism>
<name>PGFRB_CANLF</name>
<evidence type="ECO:0000250" key="1"/>
<evidence type="ECO:0000250" key="2">
    <source>
        <dbReference type="UniProtKB" id="P05622"/>
    </source>
</evidence>
<evidence type="ECO:0000250" key="3">
    <source>
        <dbReference type="UniProtKB" id="P09619"/>
    </source>
</evidence>
<evidence type="ECO:0000255" key="4"/>
<evidence type="ECO:0000255" key="5">
    <source>
        <dbReference type="PROSITE-ProRule" id="PRU00114"/>
    </source>
</evidence>
<evidence type="ECO:0000255" key="6">
    <source>
        <dbReference type="PROSITE-ProRule" id="PRU00159"/>
    </source>
</evidence>
<evidence type="ECO:0000255" key="7">
    <source>
        <dbReference type="PROSITE-ProRule" id="PRU10028"/>
    </source>
</evidence>
<evidence type="ECO:0000256" key="8">
    <source>
        <dbReference type="SAM" id="MobiDB-lite"/>
    </source>
</evidence>
<proteinExistence type="evidence at transcript level"/>
<feature type="signal peptide" evidence="4">
    <location>
        <begin position="1"/>
        <end position="31"/>
    </location>
</feature>
<feature type="chain" id="PRO_0000041843" description="Platelet-derived growth factor receptor beta">
    <location>
        <begin position="32"/>
        <end position="1103"/>
    </location>
</feature>
<feature type="topological domain" description="Extracellular" evidence="4">
    <location>
        <begin position="33"/>
        <end position="532"/>
    </location>
</feature>
<feature type="transmembrane region" description="Helical" evidence="4">
    <location>
        <begin position="533"/>
        <end position="553"/>
    </location>
</feature>
<feature type="topological domain" description="Cytoplasmic" evidence="4">
    <location>
        <begin position="554"/>
        <end position="1103"/>
    </location>
</feature>
<feature type="domain" description="Ig-like C2-type 1">
    <location>
        <begin position="33"/>
        <end position="120"/>
    </location>
</feature>
<feature type="domain" description="Ig-like C2-type 2">
    <location>
        <begin position="129"/>
        <end position="210"/>
    </location>
</feature>
<feature type="domain" description="Ig-like C2-type 3">
    <location>
        <begin position="214"/>
        <end position="309"/>
    </location>
</feature>
<feature type="domain" description="Ig-like C2-type 4">
    <location>
        <begin position="331"/>
        <end position="403"/>
    </location>
</feature>
<feature type="domain" description="Ig-like C2-type 5">
    <location>
        <begin position="416"/>
        <end position="524"/>
    </location>
</feature>
<feature type="domain" description="Protein kinase" evidence="6">
    <location>
        <begin position="600"/>
        <end position="962"/>
    </location>
</feature>
<feature type="region of interest" description="Disordered" evidence="8">
    <location>
        <begin position="1017"/>
        <end position="1103"/>
    </location>
</feature>
<feature type="compositionally biased region" description="Polar residues" evidence="8">
    <location>
        <begin position="1039"/>
        <end position="1059"/>
    </location>
</feature>
<feature type="compositionally biased region" description="Acidic residues" evidence="8">
    <location>
        <begin position="1065"/>
        <end position="1075"/>
    </location>
</feature>
<feature type="compositionally biased region" description="Pro residues" evidence="8">
    <location>
        <begin position="1076"/>
        <end position="1086"/>
    </location>
</feature>
<feature type="active site" description="Proton acceptor" evidence="6 7">
    <location>
        <position position="826"/>
    </location>
</feature>
<feature type="binding site" evidence="6">
    <location>
        <begin position="606"/>
        <end position="614"/>
    </location>
    <ligand>
        <name>ATP</name>
        <dbReference type="ChEBI" id="CHEBI:30616"/>
    </ligand>
</feature>
<feature type="binding site" evidence="6">
    <location>
        <position position="634"/>
    </location>
    <ligand>
        <name>ATP</name>
        <dbReference type="ChEBI" id="CHEBI:30616"/>
    </ligand>
</feature>
<feature type="modified residue" description="Phosphotyrosine; by autocatalysis" evidence="3">
    <location>
        <position position="562"/>
    </location>
</feature>
<feature type="modified residue" description="Phosphotyrosine; by autocatalysis" evidence="3">
    <location>
        <position position="579"/>
    </location>
</feature>
<feature type="modified residue" description="Phosphotyrosine; by autocatalysis" evidence="3">
    <location>
        <position position="581"/>
    </location>
</feature>
<feature type="modified residue" description="Phosphotyrosine; by ABL1 and ABL2" evidence="2">
    <location>
        <position position="686"/>
    </location>
</feature>
<feature type="modified residue" description="Phosphotyrosine; by autocatalysis" evidence="3">
    <location>
        <position position="716"/>
    </location>
</feature>
<feature type="modified residue" description="Phosphotyrosine; by autocatalysis" evidence="3">
    <location>
        <position position="740"/>
    </location>
</feature>
<feature type="modified residue" description="Phosphotyrosine; by autocatalysis" evidence="3">
    <location>
        <position position="751"/>
    </location>
</feature>
<feature type="modified residue" description="Phosphotyrosine; by autocatalysis" evidence="3">
    <location>
        <position position="763"/>
    </location>
</feature>
<feature type="modified residue" description="Phosphotyrosine; by autocatalysis" evidence="3">
    <location>
        <position position="771"/>
    </location>
</feature>
<feature type="modified residue" description="Phosphotyrosine; by autocatalysis" evidence="3">
    <location>
        <position position="775"/>
    </location>
</feature>
<feature type="modified residue" description="Phosphotyrosine; by autocatalysis" evidence="3">
    <location>
        <position position="778"/>
    </location>
</feature>
<feature type="modified residue" description="Phosphotyrosine; by autocatalysis" evidence="3">
    <location>
        <position position="857"/>
    </location>
</feature>
<feature type="modified residue" description="Phosphotyrosine; by ABL1 and ABL2" evidence="2">
    <location>
        <position position="934"/>
    </location>
</feature>
<feature type="modified residue" description="Phosphotyrosine; by ABL1 and ABL2" evidence="2">
    <location>
        <position position="970"/>
    </location>
</feature>
<feature type="modified residue" description="Phosphotyrosine; by autocatalysis" evidence="3">
    <location>
        <position position="1009"/>
    </location>
</feature>
<feature type="modified residue" description="Phosphotyrosine; by autocatalysis" evidence="3">
    <location>
        <position position="1021"/>
    </location>
</feature>
<feature type="glycosylation site" description="N-linked (GlcNAc...) asparagine" evidence="4">
    <location>
        <position position="45"/>
    </location>
</feature>
<feature type="glycosylation site" description="N-linked (GlcNAc...) asparagine" evidence="4">
    <location>
        <position position="89"/>
    </location>
</feature>
<feature type="glycosylation site" description="N-linked (GlcNAc...) asparagine" evidence="4">
    <location>
        <position position="215"/>
    </location>
</feature>
<feature type="glycosylation site" description="N-linked (GlcNAc...) asparagine" evidence="4">
    <location>
        <position position="230"/>
    </location>
</feature>
<feature type="glycosylation site" description="N-linked (GlcNAc...) asparagine" evidence="4">
    <location>
        <position position="292"/>
    </location>
</feature>
<feature type="glycosylation site" description="N-linked (GlcNAc...) asparagine" evidence="4">
    <location>
        <position position="307"/>
    </location>
</feature>
<feature type="glycosylation site" description="N-linked (GlcNAc...) asparagine" evidence="4">
    <location>
        <position position="354"/>
    </location>
</feature>
<feature type="glycosylation site" description="N-linked (GlcNAc...) asparagine" evidence="4">
    <location>
        <position position="371"/>
    </location>
</feature>
<feature type="glycosylation site" description="N-linked (GlcNAc...) asparagine" evidence="4">
    <location>
        <position position="468"/>
    </location>
</feature>
<feature type="glycosylation site" description="N-linked (GlcNAc...) asparagine" evidence="4">
    <location>
        <position position="479"/>
    </location>
</feature>
<feature type="disulfide bond" evidence="5">
    <location>
        <begin position="54"/>
        <end position="100"/>
    </location>
</feature>
<feature type="disulfide bond" evidence="5">
    <location>
        <begin position="149"/>
        <end position="190"/>
    </location>
</feature>
<feature type="disulfide bond" evidence="5">
    <location>
        <begin position="235"/>
        <end position="291"/>
    </location>
</feature>
<feature type="disulfide bond" evidence="5">
    <location>
        <begin position="436"/>
        <end position="508"/>
    </location>
</feature>